<name>ISPDF_CAMJ8</name>
<feature type="chain" id="PRO_1000073540" description="Bifunctional enzyme IspD/IspF">
    <location>
        <begin position="1"/>
        <end position="371"/>
    </location>
</feature>
<feature type="region of interest" description="2-C-methyl-D-erythritol 4-phosphate cytidylyltransferase" evidence="1">
    <location>
        <begin position="1"/>
        <end position="210"/>
    </location>
</feature>
<feature type="region of interest" description="2-C-methyl-D-erythritol 2,4-cyclodiphosphate synthase" evidence="1">
    <location>
        <begin position="211"/>
        <end position="371"/>
    </location>
</feature>
<feature type="binding site" evidence="1">
    <location>
        <begin position="217"/>
        <end position="219"/>
    </location>
    <ligand>
        <name>4-CDP-2-C-methyl-D-erythritol 2-phosphate</name>
        <dbReference type="ChEBI" id="CHEBI:57919"/>
    </ligand>
</feature>
<feature type="binding site" evidence="1">
    <location>
        <position position="217"/>
    </location>
    <ligand>
        <name>a divalent metal cation</name>
        <dbReference type="ChEBI" id="CHEBI:60240"/>
    </ligand>
</feature>
<feature type="binding site" evidence="1">
    <location>
        <position position="219"/>
    </location>
    <ligand>
        <name>a divalent metal cation</name>
        <dbReference type="ChEBI" id="CHEBI:60240"/>
    </ligand>
</feature>
<feature type="binding site" evidence="1">
    <location>
        <begin position="243"/>
        <end position="244"/>
    </location>
    <ligand>
        <name>4-CDP-2-C-methyl-D-erythritol 2-phosphate</name>
        <dbReference type="ChEBI" id="CHEBI:57919"/>
    </ligand>
</feature>
<feature type="binding site" evidence="1">
    <location>
        <position position="251"/>
    </location>
    <ligand>
        <name>a divalent metal cation</name>
        <dbReference type="ChEBI" id="CHEBI:60240"/>
    </ligand>
</feature>
<feature type="binding site" evidence="1">
    <location>
        <begin position="265"/>
        <end position="267"/>
    </location>
    <ligand>
        <name>4-CDP-2-C-methyl-D-erythritol 2-phosphate</name>
        <dbReference type="ChEBI" id="CHEBI:57919"/>
    </ligand>
</feature>
<feature type="binding site" evidence="1">
    <location>
        <begin position="270"/>
        <end position="274"/>
    </location>
    <ligand>
        <name>4-CDP-2-C-methyl-D-erythritol 2-phosphate</name>
        <dbReference type="ChEBI" id="CHEBI:57919"/>
    </ligand>
</feature>
<feature type="binding site" evidence="1">
    <location>
        <begin position="341"/>
        <end position="344"/>
    </location>
    <ligand>
        <name>4-CDP-2-C-methyl-D-erythritol 2-phosphate</name>
        <dbReference type="ChEBI" id="CHEBI:57919"/>
    </ligand>
</feature>
<feature type="binding site" evidence="1">
    <location>
        <position position="348"/>
    </location>
    <ligand>
        <name>4-CDP-2-C-methyl-D-erythritol 2-phosphate</name>
        <dbReference type="ChEBI" id="CHEBI:57919"/>
    </ligand>
</feature>
<feature type="binding site" evidence="1">
    <location>
        <position position="351"/>
    </location>
    <ligand>
        <name>4-CDP-2-C-methyl-D-erythritol 2-phosphate</name>
        <dbReference type="ChEBI" id="CHEBI:57919"/>
    </ligand>
</feature>
<feature type="site" description="Transition state stabilizer" evidence="1">
    <location>
        <position position="16"/>
    </location>
</feature>
<feature type="site" description="Transition state stabilizer" evidence="1">
    <location>
        <position position="23"/>
    </location>
</feature>
<feature type="site" description="Positions MEP for the nucleophilic attack" evidence="1">
    <location>
        <position position="139"/>
    </location>
</feature>
<feature type="site" description="Positions MEP for the nucleophilic attack" evidence="1">
    <location>
        <position position="191"/>
    </location>
</feature>
<feature type="site" description="Transition state stabilizer" evidence="1">
    <location>
        <position position="243"/>
    </location>
</feature>
<feature type="site" description="Transition state stabilizer" evidence="1">
    <location>
        <position position="342"/>
    </location>
</feature>
<evidence type="ECO:0000255" key="1">
    <source>
        <dbReference type="HAMAP-Rule" id="MF_01520"/>
    </source>
</evidence>
<dbReference type="EC" id="2.7.7.60" evidence="1"/>
<dbReference type="EC" id="4.6.1.12" evidence="1"/>
<dbReference type="EMBL" id="CP000814">
    <property type="protein sequence ID" value="ABV53105.1"/>
    <property type="molecule type" value="Genomic_DNA"/>
</dbReference>
<dbReference type="RefSeq" id="WP_002877789.1">
    <property type="nucleotide sequence ID" value="NC_009839.1"/>
</dbReference>
<dbReference type="SMR" id="A8FNR8"/>
<dbReference type="KEGG" id="cju:C8J_1508"/>
<dbReference type="HOGENOM" id="CLU_042800_2_5_7"/>
<dbReference type="UniPathway" id="UPA00056">
    <property type="reaction ID" value="UER00093"/>
</dbReference>
<dbReference type="UniPathway" id="UPA00056">
    <property type="reaction ID" value="UER00095"/>
</dbReference>
<dbReference type="GO" id="GO:0008685">
    <property type="term" value="F:2-C-methyl-D-erythritol 2,4-cyclodiphosphate synthase activity"/>
    <property type="evidence" value="ECO:0007669"/>
    <property type="project" value="UniProtKB-UniRule"/>
</dbReference>
<dbReference type="GO" id="GO:0050518">
    <property type="term" value="F:2-C-methyl-D-erythritol 4-phosphate cytidylyltransferase activity"/>
    <property type="evidence" value="ECO:0007669"/>
    <property type="project" value="UniProtKB-UniRule"/>
</dbReference>
<dbReference type="GO" id="GO:0046872">
    <property type="term" value="F:metal ion binding"/>
    <property type="evidence" value="ECO:0007669"/>
    <property type="project" value="UniProtKB-KW"/>
</dbReference>
<dbReference type="GO" id="GO:0019288">
    <property type="term" value="P:isopentenyl diphosphate biosynthetic process, methylerythritol 4-phosphate pathway"/>
    <property type="evidence" value="ECO:0007669"/>
    <property type="project" value="UniProtKB-UniRule"/>
</dbReference>
<dbReference type="GO" id="GO:0016114">
    <property type="term" value="P:terpenoid biosynthetic process"/>
    <property type="evidence" value="ECO:0007669"/>
    <property type="project" value="InterPro"/>
</dbReference>
<dbReference type="CDD" id="cd02516">
    <property type="entry name" value="CDP-ME_synthetase"/>
    <property type="match status" value="1"/>
</dbReference>
<dbReference type="CDD" id="cd00554">
    <property type="entry name" value="MECDP_synthase"/>
    <property type="match status" value="1"/>
</dbReference>
<dbReference type="Gene3D" id="3.30.1330.50">
    <property type="entry name" value="2-C-methyl-D-erythritol 2,4-cyclodiphosphate synthase"/>
    <property type="match status" value="1"/>
</dbReference>
<dbReference type="Gene3D" id="3.90.550.10">
    <property type="entry name" value="Spore Coat Polysaccharide Biosynthesis Protein SpsA, Chain A"/>
    <property type="match status" value="1"/>
</dbReference>
<dbReference type="HAMAP" id="MF_01520">
    <property type="entry name" value="IspDF"/>
    <property type="match status" value="1"/>
</dbReference>
<dbReference type="HAMAP" id="MF_00107">
    <property type="entry name" value="IspF"/>
    <property type="match status" value="1"/>
</dbReference>
<dbReference type="InterPro" id="IPR001228">
    <property type="entry name" value="IspD"/>
</dbReference>
<dbReference type="InterPro" id="IPR026596">
    <property type="entry name" value="IspD/F"/>
</dbReference>
<dbReference type="InterPro" id="IPR034683">
    <property type="entry name" value="IspD/TarI"/>
</dbReference>
<dbReference type="InterPro" id="IPR018294">
    <property type="entry name" value="ISPD_synthase_CS"/>
</dbReference>
<dbReference type="InterPro" id="IPR003526">
    <property type="entry name" value="MECDP_synthase"/>
</dbReference>
<dbReference type="InterPro" id="IPR020555">
    <property type="entry name" value="MECDP_synthase_CS"/>
</dbReference>
<dbReference type="InterPro" id="IPR036571">
    <property type="entry name" value="MECDP_synthase_sf"/>
</dbReference>
<dbReference type="InterPro" id="IPR029044">
    <property type="entry name" value="Nucleotide-diphossugar_trans"/>
</dbReference>
<dbReference type="NCBIfam" id="TIGR00453">
    <property type="entry name" value="ispD"/>
    <property type="match status" value="1"/>
</dbReference>
<dbReference type="NCBIfam" id="TIGR00151">
    <property type="entry name" value="ispF"/>
    <property type="match status" value="1"/>
</dbReference>
<dbReference type="NCBIfam" id="NF006899">
    <property type="entry name" value="PRK09382.1"/>
    <property type="match status" value="1"/>
</dbReference>
<dbReference type="PANTHER" id="PTHR43181">
    <property type="entry name" value="2-C-METHYL-D-ERYTHRITOL 2,4-CYCLODIPHOSPHATE SYNTHASE, CHLOROPLASTIC"/>
    <property type="match status" value="1"/>
</dbReference>
<dbReference type="PANTHER" id="PTHR43181:SF1">
    <property type="entry name" value="2-C-METHYL-D-ERYTHRITOL 2,4-CYCLODIPHOSPHATE SYNTHASE, CHLOROPLASTIC"/>
    <property type="match status" value="1"/>
</dbReference>
<dbReference type="Pfam" id="PF01128">
    <property type="entry name" value="IspD"/>
    <property type="match status" value="1"/>
</dbReference>
<dbReference type="Pfam" id="PF02542">
    <property type="entry name" value="YgbB"/>
    <property type="match status" value="1"/>
</dbReference>
<dbReference type="SUPFAM" id="SSF69765">
    <property type="entry name" value="IpsF-like"/>
    <property type="match status" value="1"/>
</dbReference>
<dbReference type="SUPFAM" id="SSF53448">
    <property type="entry name" value="Nucleotide-diphospho-sugar transferases"/>
    <property type="match status" value="1"/>
</dbReference>
<dbReference type="PROSITE" id="PS01295">
    <property type="entry name" value="ISPD"/>
    <property type="match status" value="1"/>
</dbReference>
<dbReference type="PROSITE" id="PS01350">
    <property type="entry name" value="ISPF"/>
    <property type="match status" value="1"/>
</dbReference>
<protein>
    <recommendedName>
        <fullName evidence="1">Bifunctional enzyme IspD/IspF</fullName>
    </recommendedName>
    <domain>
        <recommendedName>
            <fullName evidence="1">2-C-methyl-D-erythritol 4-phosphate cytidylyltransferase</fullName>
            <ecNumber evidence="1">2.7.7.60</ecNumber>
        </recommendedName>
        <alternativeName>
            <fullName evidence="1">4-diphosphocytidyl-2C-methyl-D-erythritol synthase</fullName>
        </alternativeName>
        <alternativeName>
            <fullName evidence="1">MEP cytidylyltransferase</fullName>
            <shortName evidence="1">MCT</shortName>
        </alternativeName>
    </domain>
    <domain>
        <recommendedName>
            <fullName evidence="1">2-C-methyl-D-erythritol 2,4-cyclodiphosphate synthase</fullName>
            <shortName evidence="1">MECDP-synthase</shortName>
            <shortName evidence="1">MECPP-synthase</shortName>
            <shortName evidence="1">MECPS</shortName>
            <ecNumber evidence="1">4.6.1.12</ecNumber>
        </recommendedName>
    </domain>
</protein>
<proteinExistence type="inferred from homology"/>
<keyword id="KW-0414">Isoprene biosynthesis</keyword>
<keyword id="KW-0456">Lyase</keyword>
<keyword id="KW-0479">Metal-binding</keyword>
<keyword id="KW-0511">Multifunctional enzyme</keyword>
<keyword id="KW-0548">Nucleotidyltransferase</keyword>
<keyword id="KW-0808">Transferase</keyword>
<sequence>MSEISLIMLAAGNSTRFNTKVKKQFLRLGNDPLWLYATKNLSSFYPFKKIVVTSSNITYMKKFTKNYEFIEGGDTRAESLKKALELIDSEFVMVSDVARVLVSKNLFDRLIENLDKADCITPALKVADTTLFDNEALQREKIKLIQTPQISKTKLLKKALDQNLEFTDDSTAIAAMGGKIWFVEGEENARKLTFKEDLKKLDLPTPSFEIFTGNGFDVHEFGENRPLLLAGVQIHPTMGLKAHSDGDVLAHSLTDAILGAAGLGDIGELYPDTDMKFKNANSMELLKQAYDKVREVGFELINIDICVMAQSPKLKDFKQAMQSNIAHTLDLDEFRINVKATTTEKLGFIGRKEGMAVLSSVNLKYFDWTRL</sequence>
<comment type="function">
    <text evidence="1">Bifunctional enzyme that catalyzes the formation of 4-diphosphocytidyl-2-C-methyl-D-erythritol from CTP and 2-C-methyl-D-erythritol 4-phosphate (MEP) (IspD), and catalyzes the conversion of 4-diphosphocytidyl-2-C-methyl-D-erythritol 2-phosphate (CDP-ME2P) to 2-C-methyl-D-erythritol 2,4-cyclodiphosphate (ME-CPP) with a corresponding release of cytidine 5-monophosphate (CMP) (IspF).</text>
</comment>
<comment type="catalytic activity">
    <reaction evidence="1">
        <text>2-C-methyl-D-erythritol 4-phosphate + CTP + H(+) = 4-CDP-2-C-methyl-D-erythritol + diphosphate</text>
        <dbReference type="Rhea" id="RHEA:13429"/>
        <dbReference type="ChEBI" id="CHEBI:15378"/>
        <dbReference type="ChEBI" id="CHEBI:33019"/>
        <dbReference type="ChEBI" id="CHEBI:37563"/>
        <dbReference type="ChEBI" id="CHEBI:57823"/>
        <dbReference type="ChEBI" id="CHEBI:58262"/>
        <dbReference type="EC" id="2.7.7.60"/>
    </reaction>
</comment>
<comment type="catalytic activity">
    <reaction evidence="1">
        <text>4-CDP-2-C-methyl-D-erythritol 2-phosphate = 2-C-methyl-D-erythritol 2,4-cyclic diphosphate + CMP</text>
        <dbReference type="Rhea" id="RHEA:23864"/>
        <dbReference type="ChEBI" id="CHEBI:57919"/>
        <dbReference type="ChEBI" id="CHEBI:58483"/>
        <dbReference type="ChEBI" id="CHEBI:60377"/>
        <dbReference type="EC" id="4.6.1.12"/>
    </reaction>
</comment>
<comment type="cofactor">
    <cofactor evidence="1">
        <name>a divalent metal cation</name>
        <dbReference type="ChEBI" id="CHEBI:60240"/>
    </cofactor>
</comment>
<comment type="pathway">
    <text evidence="1">Isoprenoid biosynthesis; isopentenyl diphosphate biosynthesis via DXP pathway; isopentenyl diphosphate from 1-deoxy-D-xylulose 5-phosphate: step 2/6.</text>
</comment>
<comment type="pathway">
    <text evidence="1">Isoprenoid biosynthesis; isopentenyl diphosphate biosynthesis via DXP pathway; isopentenyl diphosphate from 1-deoxy-D-xylulose 5-phosphate: step 4/6.</text>
</comment>
<comment type="similarity">
    <text evidence="1">In the N-terminal section; belongs to the IspD/TarI cytidylyltransferase family. IspD subfamily.</text>
</comment>
<comment type="similarity">
    <text evidence="1">In the C-terminal section; belongs to the IspF family.</text>
</comment>
<organism>
    <name type="scientific">Campylobacter jejuni subsp. jejuni serotype O:6 (strain 81116 / NCTC 11828)</name>
    <dbReference type="NCBI Taxonomy" id="407148"/>
    <lineage>
        <taxon>Bacteria</taxon>
        <taxon>Pseudomonadati</taxon>
        <taxon>Campylobacterota</taxon>
        <taxon>Epsilonproteobacteria</taxon>
        <taxon>Campylobacterales</taxon>
        <taxon>Campylobacteraceae</taxon>
        <taxon>Campylobacter</taxon>
    </lineage>
</organism>
<gene>
    <name evidence="1" type="primary">ispDF</name>
    <name type="ordered locus">C8J_1508</name>
</gene>
<reference key="1">
    <citation type="journal article" date="2007" name="J. Bacteriol.">
        <title>The complete genome sequence of Campylobacter jejuni strain 81116 (NCTC11828).</title>
        <authorList>
            <person name="Pearson B.M."/>
            <person name="Gaskin D.J.H."/>
            <person name="Segers R.P.A.M."/>
            <person name="Wells J.M."/>
            <person name="Nuijten P.J.M."/>
            <person name="van Vliet A.H.M."/>
        </authorList>
    </citation>
    <scope>NUCLEOTIDE SEQUENCE [LARGE SCALE GENOMIC DNA]</scope>
    <source>
        <strain>81116 / NCTC 11828</strain>
    </source>
</reference>
<accession>A8FNR8</accession>